<dbReference type="EMBL" id="AE003849">
    <property type="protein sequence ID" value="AAF83972.1"/>
    <property type="molecule type" value="Genomic_DNA"/>
</dbReference>
<dbReference type="PIR" id="B82718">
    <property type="entry name" value="B82718"/>
</dbReference>
<dbReference type="RefSeq" id="WP_004086533.1">
    <property type="nucleotide sequence ID" value="NC_002488.3"/>
</dbReference>
<dbReference type="SMR" id="Q9PE66"/>
<dbReference type="STRING" id="160492.XF_1162"/>
<dbReference type="KEGG" id="xfa:XF_1162"/>
<dbReference type="eggNOG" id="COG0093">
    <property type="taxonomic scope" value="Bacteria"/>
</dbReference>
<dbReference type="HOGENOM" id="CLU_095071_2_1_6"/>
<dbReference type="Proteomes" id="UP000000812">
    <property type="component" value="Chromosome"/>
</dbReference>
<dbReference type="GO" id="GO:0022625">
    <property type="term" value="C:cytosolic large ribosomal subunit"/>
    <property type="evidence" value="ECO:0007669"/>
    <property type="project" value="TreeGrafter"/>
</dbReference>
<dbReference type="GO" id="GO:0070180">
    <property type="term" value="F:large ribosomal subunit rRNA binding"/>
    <property type="evidence" value="ECO:0007669"/>
    <property type="project" value="TreeGrafter"/>
</dbReference>
<dbReference type="GO" id="GO:0003735">
    <property type="term" value="F:structural constituent of ribosome"/>
    <property type="evidence" value="ECO:0007669"/>
    <property type="project" value="InterPro"/>
</dbReference>
<dbReference type="GO" id="GO:0006412">
    <property type="term" value="P:translation"/>
    <property type="evidence" value="ECO:0007669"/>
    <property type="project" value="UniProtKB-UniRule"/>
</dbReference>
<dbReference type="CDD" id="cd00337">
    <property type="entry name" value="Ribosomal_uL14"/>
    <property type="match status" value="1"/>
</dbReference>
<dbReference type="FunFam" id="2.40.150.20:FF:000001">
    <property type="entry name" value="50S ribosomal protein L14"/>
    <property type="match status" value="1"/>
</dbReference>
<dbReference type="Gene3D" id="2.40.150.20">
    <property type="entry name" value="Ribosomal protein L14"/>
    <property type="match status" value="1"/>
</dbReference>
<dbReference type="HAMAP" id="MF_01367">
    <property type="entry name" value="Ribosomal_uL14"/>
    <property type="match status" value="1"/>
</dbReference>
<dbReference type="InterPro" id="IPR000218">
    <property type="entry name" value="Ribosomal_uL14"/>
</dbReference>
<dbReference type="InterPro" id="IPR005745">
    <property type="entry name" value="Ribosomal_uL14_bac-type"/>
</dbReference>
<dbReference type="InterPro" id="IPR019972">
    <property type="entry name" value="Ribosomal_uL14_CS"/>
</dbReference>
<dbReference type="InterPro" id="IPR036853">
    <property type="entry name" value="Ribosomal_uL14_sf"/>
</dbReference>
<dbReference type="NCBIfam" id="TIGR01067">
    <property type="entry name" value="rplN_bact"/>
    <property type="match status" value="1"/>
</dbReference>
<dbReference type="PANTHER" id="PTHR11761">
    <property type="entry name" value="50S/60S RIBOSOMAL PROTEIN L14/L23"/>
    <property type="match status" value="1"/>
</dbReference>
<dbReference type="PANTHER" id="PTHR11761:SF3">
    <property type="entry name" value="LARGE RIBOSOMAL SUBUNIT PROTEIN UL14M"/>
    <property type="match status" value="1"/>
</dbReference>
<dbReference type="Pfam" id="PF00238">
    <property type="entry name" value="Ribosomal_L14"/>
    <property type="match status" value="1"/>
</dbReference>
<dbReference type="SMART" id="SM01374">
    <property type="entry name" value="Ribosomal_L14"/>
    <property type="match status" value="1"/>
</dbReference>
<dbReference type="SUPFAM" id="SSF50193">
    <property type="entry name" value="Ribosomal protein L14"/>
    <property type="match status" value="1"/>
</dbReference>
<dbReference type="PROSITE" id="PS00049">
    <property type="entry name" value="RIBOSOMAL_L14"/>
    <property type="match status" value="1"/>
</dbReference>
<accession>Q9PE66</accession>
<name>RL14_XYLFA</name>
<organism>
    <name type="scientific">Xylella fastidiosa (strain 9a5c)</name>
    <dbReference type="NCBI Taxonomy" id="160492"/>
    <lineage>
        <taxon>Bacteria</taxon>
        <taxon>Pseudomonadati</taxon>
        <taxon>Pseudomonadota</taxon>
        <taxon>Gammaproteobacteria</taxon>
        <taxon>Lysobacterales</taxon>
        <taxon>Lysobacteraceae</taxon>
        <taxon>Xylella</taxon>
    </lineage>
</organism>
<evidence type="ECO:0000255" key="1">
    <source>
        <dbReference type="HAMAP-Rule" id="MF_01367"/>
    </source>
</evidence>
<evidence type="ECO:0000305" key="2"/>
<proteinExistence type="inferred from homology"/>
<comment type="function">
    <text evidence="1">Binds to 23S rRNA. Forms part of two intersubunit bridges in the 70S ribosome.</text>
</comment>
<comment type="subunit">
    <text evidence="1">Part of the 50S ribosomal subunit. Forms a cluster with proteins L3 and L19. In the 70S ribosome, L14 and L19 interact and together make contacts with the 16S rRNA in bridges B5 and B8.</text>
</comment>
<comment type="similarity">
    <text evidence="1">Belongs to the universal ribosomal protein uL14 family.</text>
</comment>
<sequence length="122" mass="13341">MIQMQSYLGVADNSGAKEVMCIKVLGGSKRRYASIGDIIKVTVKEAIPRGKVKKGEVYDAVVVRTRSGVRRPDGSLIRFDGNAAVLLNNKQEPIGTRVFGPVTRELRSEKLMKIVSLAPEVL</sequence>
<feature type="chain" id="PRO_0000266589" description="Large ribosomal subunit protein uL14">
    <location>
        <begin position="1"/>
        <end position="122"/>
    </location>
</feature>
<reference key="1">
    <citation type="journal article" date="2000" name="Nature">
        <title>The genome sequence of the plant pathogen Xylella fastidiosa.</title>
        <authorList>
            <person name="Simpson A.J.G."/>
            <person name="Reinach F.C."/>
            <person name="Arruda P."/>
            <person name="Abreu F.A."/>
            <person name="Acencio M."/>
            <person name="Alvarenga R."/>
            <person name="Alves L.M.C."/>
            <person name="Araya J.E."/>
            <person name="Baia G.S."/>
            <person name="Baptista C.S."/>
            <person name="Barros M.H."/>
            <person name="Bonaccorsi E.D."/>
            <person name="Bordin S."/>
            <person name="Bove J.M."/>
            <person name="Briones M.R.S."/>
            <person name="Bueno M.R.P."/>
            <person name="Camargo A.A."/>
            <person name="Camargo L.E.A."/>
            <person name="Carraro D.M."/>
            <person name="Carrer H."/>
            <person name="Colauto N.B."/>
            <person name="Colombo C."/>
            <person name="Costa F.F."/>
            <person name="Costa M.C.R."/>
            <person name="Costa-Neto C.M."/>
            <person name="Coutinho L.L."/>
            <person name="Cristofani M."/>
            <person name="Dias-Neto E."/>
            <person name="Docena C."/>
            <person name="El-Dorry H."/>
            <person name="Facincani A.P."/>
            <person name="Ferreira A.J.S."/>
            <person name="Ferreira V.C.A."/>
            <person name="Ferro J.A."/>
            <person name="Fraga J.S."/>
            <person name="Franca S.C."/>
            <person name="Franco M.C."/>
            <person name="Frohme M."/>
            <person name="Furlan L.R."/>
            <person name="Garnier M."/>
            <person name="Goldman G.H."/>
            <person name="Goldman M.H.S."/>
            <person name="Gomes S.L."/>
            <person name="Gruber A."/>
            <person name="Ho P.L."/>
            <person name="Hoheisel J.D."/>
            <person name="Junqueira M.L."/>
            <person name="Kemper E.L."/>
            <person name="Kitajima J.P."/>
            <person name="Krieger J.E."/>
            <person name="Kuramae E.E."/>
            <person name="Laigret F."/>
            <person name="Lambais M.R."/>
            <person name="Leite L.C.C."/>
            <person name="Lemos E.G.M."/>
            <person name="Lemos M.V.F."/>
            <person name="Lopes S.A."/>
            <person name="Lopes C.R."/>
            <person name="Machado J.A."/>
            <person name="Machado M.A."/>
            <person name="Madeira A.M.B.N."/>
            <person name="Madeira H.M.F."/>
            <person name="Marino C.L."/>
            <person name="Marques M.V."/>
            <person name="Martins E.A.L."/>
            <person name="Martins E.M.F."/>
            <person name="Matsukuma A.Y."/>
            <person name="Menck C.F.M."/>
            <person name="Miracca E.C."/>
            <person name="Miyaki C.Y."/>
            <person name="Monteiro-Vitorello C.B."/>
            <person name="Moon D.H."/>
            <person name="Nagai M.A."/>
            <person name="Nascimento A.L.T.O."/>
            <person name="Netto L.E.S."/>
            <person name="Nhani A. Jr."/>
            <person name="Nobrega F.G."/>
            <person name="Nunes L.R."/>
            <person name="Oliveira M.A."/>
            <person name="de Oliveira M.C."/>
            <person name="de Oliveira R.C."/>
            <person name="Palmieri D.A."/>
            <person name="Paris A."/>
            <person name="Peixoto B.R."/>
            <person name="Pereira G.A.G."/>
            <person name="Pereira H.A. Jr."/>
            <person name="Pesquero J.B."/>
            <person name="Quaggio R.B."/>
            <person name="Roberto P.G."/>
            <person name="Rodrigues V."/>
            <person name="de Rosa A.J.M."/>
            <person name="de Rosa V.E. Jr."/>
            <person name="de Sa R.G."/>
            <person name="Santelli R.V."/>
            <person name="Sawasaki H.E."/>
            <person name="da Silva A.C.R."/>
            <person name="da Silva A.M."/>
            <person name="da Silva F.R."/>
            <person name="Silva W.A. Jr."/>
            <person name="da Silveira J.F."/>
            <person name="Silvestri M.L.Z."/>
            <person name="Siqueira W.J."/>
            <person name="de Souza A.A."/>
            <person name="de Souza A.P."/>
            <person name="Terenzi M.F."/>
            <person name="Truffi D."/>
            <person name="Tsai S.M."/>
            <person name="Tsuhako M.H."/>
            <person name="Vallada H."/>
            <person name="Van Sluys M.A."/>
            <person name="Verjovski-Almeida S."/>
            <person name="Vettore A.L."/>
            <person name="Zago M.A."/>
            <person name="Zatz M."/>
            <person name="Meidanis J."/>
            <person name="Setubal J.C."/>
        </authorList>
    </citation>
    <scope>NUCLEOTIDE SEQUENCE [LARGE SCALE GENOMIC DNA]</scope>
    <source>
        <strain>9a5c</strain>
    </source>
</reference>
<protein>
    <recommendedName>
        <fullName evidence="1">Large ribosomal subunit protein uL14</fullName>
    </recommendedName>
    <alternativeName>
        <fullName evidence="2">50S ribosomal protein L14</fullName>
    </alternativeName>
</protein>
<keyword id="KW-0687">Ribonucleoprotein</keyword>
<keyword id="KW-0689">Ribosomal protein</keyword>
<keyword id="KW-0694">RNA-binding</keyword>
<keyword id="KW-0699">rRNA-binding</keyword>
<gene>
    <name evidence="1" type="primary">rplN</name>
    <name type="ordered locus">XF_1162</name>
</gene>